<dbReference type="EC" id="6.3.4.5" evidence="1"/>
<dbReference type="EMBL" id="CP001392">
    <property type="protein sequence ID" value="ACM33671.1"/>
    <property type="molecule type" value="Genomic_DNA"/>
</dbReference>
<dbReference type="RefSeq" id="WP_011805899.1">
    <property type="nucleotide sequence ID" value="NC_011992.1"/>
</dbReference>
<dbReference type="SMR" id="B9MBJ2"/>
<dbReference type="GeneID" id="84681005"/>
<dbReference type="KEGG" id="dia:Dtpsy_2233"/>
<dbReference type="eggNOG" id="COG0137">
    <property type="taxonomic scope" value="Bacteria"/>
</dbReference>
<dbReference type="HOGENOM" id="CLU_032784_4_1_4"/>
<dbReference type="UniPathway" id="UPA00068">
    <property type="reaction ID" value="UER00113"/>
</dbReference>
<dbReference type="Proteomes" id="UP000000450">
    <property type="component" value="Chromosome"/>
</dbReference>
<dbReference type="GO" id="GO:0005737">
    <property type="term" value="C:cytoplasm"/>
    <property type="evidence" value="ECO:0007669"/>
    <property type="project" value="UniProtKB-SubCell"/>
</dbReference>
<dbReference type="GO" id="GO:0004055">
    <property type="term" value="F:argininosuccinate synthase activity"/>
    <property type="evidence" value="ECO:0007669"/>
    <property type="project" value="UniProtKB-UniRule"/>
</dbReference>
<dbReference type="GO" id="GO:0005524">
    <property type="term" value="F:ATP binding"/>
    <property type="evidence" value="ECO:0007669"/>
    <property type="project" value="UniProtKB-UniRule"/>
</dbReference>
<dbReference type="GO" id="GO:0042803">
    <property type="term" value="F:protein homodimerization activity"/>
    <property type="evidence" value="ECO:0007669"/>
    <property type="project" value="InterPro"/>
</dbReference>
<dbReference type="GO" id="GO:0000053">
    <property type="term" value="P:argininosuccinate metabolic process"/>
    <property type="evidence" value="ECO:0007669"/>
    <property type="project" value="TreeGrafter"/>
</dbReference>
<dbReference type="GO" id="GO:0006526">
    <property type="term" value="P:L-arginine biosynthetic process"/>
    <property type="evidence" value="ECO:0007669"/>
    <property type="project" value="UniProtKB-UniRule"/>
</dbReference>
<dbReference type="GO" id="GO:0000050">
    <property type="term" value="P:urea cycle"/>
    <property type="evidence" value="ECO:0007669"/>
    <property type="project" value="TreeGrafter"/>
</dbReference>
<dbReference type="CDD" id="cd01999">
    <property type="entry name" value="ASS"/>
    <property type="match status" value="1"/>
</dbReference>
<dbReference type="Gene3D" id="1.10.287.400">
    <property type="match status" value="1"/>
</dbReference>
<dbReference type="Gene3D" id="3.90.1260.10">
    <property type="entry name" value="Argininosuccinate synthetase, chain A, domain 2"/>
    <property type="match status" value="1"/>
</dbReference>
<dbReference type="Gene3D" id="3.40.50.620">
    <property type="entry name" value="HUPs"/>
    <property type="match status" value="1"/>
</dbReference>
<dbReference type="HAMAP" id="MF_00581">
    <property type="entry name" value="Arg_succ_synth_type2"/>
    <property type="match status" value="1"/>
</dbReference>
<dbReference type="InterPro" id="IPR023437">
    <property type="entry name" value="Arg_succ_synth_type2_subfam"/>
</dbReference>
<dbReference type="InterPro" id="IPR048268">
    <property type="entry name" value="Arginosuc_syn_C"/>
</dbReference>
<dbReference type="InterPro" id="IPR048267">
    <property type="entry name" value="Arginosuc_syn_N"/>
</dbReference>
<dbReference type="InterPro" id="IPR001518">
    <property type="entry name" value="Arginosuc_synth"/>
</dbReference>
<dbReference type="InterPro" id="IPR018223">
    <property type="entry name" value="Arginosuc_synth_CS"/>
</dbReference>
<dbReference type="InterPro" id="IPR023434">
    <property type="entry name" value="Arginosuc_synth_type_1_subfam"/>
</dbReference>
<dbReference type="InterPro" id="IPR024074">
    <property type="entry name" value="AS_cat/multimer_dom_body"/>
</dbReference>
<dbReference type="InterPro" id="IPR024073">
    <property type="entry name" value="AS_multimer_C_tail"/>
</dbReference>
<dbReference type="InterPro" id="IPR014729">
    <property type="entry name" value="Rossmann-like_a/b/a_fold"/>
</dbReference>
<dbReference type="NCBIfam" id="TIGR00032">
    <property type="entry name" value="argG"/>
    <property type="match status" value="1"/>
</dbReference>
<dbReference type="NCBIfam" id="NF003779">
    <property type="entry name" value="PRK05370.1"/>
    <property type="match status" value="1"/>
</dbReference>
<dbReference type="PANTHER" id="PTHR11587">
    <property type="entry name" value="ARGININOSUCCINATE SYNTHASE"/>
    <property type="match status" value="1"/>
</dbReference>
<dbReference type="PANTHER" id="PTHR11587:SF2">
    <property type="entry name" value="ARGININOSUCCINATE SYNTHASE"/>
    <property type="match status" value="1"/>
</dbReference>
<dbReference type="Pfam" id="PF20979">
    <property type="entry name" value="Arginosuc_syn_C"/>
    <property type="match status" value="1"/>
</dbReference>
<dbReference type="Pfam" id="PF00764">
    <property type="entry name" value="Arginosuc_synth"/>
    <property type="match status" value="1"/>
</dbReference>
<dbReference type="SUPFAM" id="SSF52402">
    <property type="entry name" value="Adenine nucleotide alpha hydrolases-like"/>
    <property type="match status" value="1"/>
</dbReference>
<dbReference type="SUPFAM" id="SSF69864">
    <property type="entry name" value="Argininosuccinate synthetase, C-terminal domain"/>
    <property type="match status" value="1"/>
</dbReference>
<dbReference type="PROSITE" id="PS00564">
    <property type="entry name" value="ARGININOSUCCIN_SYN_1"/>
    <property type="match status" value="1"/>
</dbReference>
<dbReference type="PROSITE" id="PS00565">
    <property type="entry name" value="ARGININOSUCCIN_SYN_2"/>
    <property type="match status" value="1"/>
</dbReference>
<accession>B9MBJ2</accession>
<feature type="chain" id="PRO_1000146928" description="Argininosuccinate synthase">
    <location>
        <begin position="1"/>
        <end position="448"/>
    </location>
</feature>
<feature type="binding site" evidence="1">
    <location>
        <begin position="17"/>
        <end position="25"/>
    </location>
    <ligand>
        <name>ATP</name>
        <dbReference type="ChEBI" id="CHEBI:30616"/>
    </ligand>
</feature>
<feature type="binding site" evidence="1">
    <location>
        <position position="43"/>
    </location>
    <ligand>
        <name>ATP</name>
        <dbReference type="ChEBI" id="CHEBI:30616"/>
    </ligand>
</feature>
<feature type="binding site" evidence="1">
    <location>
        <position position="99"/>
    </location>
    <ligand>
        <name>L-citrulline</name>
        <dbReference type="ChEBI" id="CHEBI:57743"/>
    </ligand>
</feature>
<feature type="binding site" evidence="1">
    <location>
        <position position="129"/>
    </location>
    <ligand>
        <name>ATP</name>
        <dbReference type="ChEBI" id="CHEBI:30616"/>
    </ligand>
</feature>
<feature type="binding site" evidence="1">
    <location>
        <position position="131"/>
    </location>
    <ligand>
        <name>ATP</name>
        <dbReference type="ChEBI" id="CHEBI:30616"/>
    </ligand>
</feature>
<feature type="binding site" evidence="1">
    <location>
        <position position="131"/>
    </location>
    <ligand>
        <name>L-aspartate</name>
        <dbReference type="ChEBI" id="CHEBI:29991"/>
    </ligand>
</feature>
<feature type="binding site" evidence="1">
    <location>
        <position position="135"/>
    </location>
    <ligand>
        <name>L-aspartate</name>
        <dbReference type="ChEBI" id="CHEBI:29991"/>
    </ligand>
</feature>
<feature type="binding site" evidence="1">
    <location>
        <position position="135"/>
    </location>
    <ligand>
        <name>L-citrulline</name>
        <dbReference type="ChEBI" id="CHEBI:57743"/>
    </ligand>
</feature>
<feature type="binding site" evidence="1">
    <location>
        <position position="136"/>
    </location>
    <ligand>
        <name>ATP</name>
        <dbReference type="ChEBI" id="CHEBI:30616"/>
    </ligand>
</feature>
<feature type="binding site" evidence="1">
    <location>
        <position position="136"/>
    </location>
    <ligand>
        <name>L-aspartate</name>
        <dbReference type="ChEBI" id="CHEBI:29991"/>
    </ligand>
</feature>
<feature type="binding site" evidence="1">
    <location>
        <position position="139"/>
    </location>
    <ligand>
        <name>L-citrulline</name>
        <dbReference type="ChEBI" id="CHEBI:57743"/>
    </ligand>
</feature>
<feature type="binding site" evidence="1">
    <location>
        <position position="192"/>
    </location>
    <ligand>
        <name>L-citrulline</name>
        <dbReference type="ChEBI" id="CHEBI:57743"/>
    </ligand>
</feature>
<feature type="binding site" evidence="1">
    <location>
        <position position="194"/>
    </location>
    <ligand>
        <name>ATP</name>
        <dbReference type="ChEBI" id="CHEBI:30616"/>
    </ligand>
</feature>
<feature type="binding site" evidence="1">
    <location>
        <position position="201"/>
    </location>
    <ligand>
        <name>L-citrulline</name>
        <dbReference type="ChEBI" id="CHEBI:57743"/>
    </ligand>
</feature>
<feature type="binding site" evidence="1">
    <location>
        <position position="203"/>
    </location>
    <ligand>
        <name>L-citrulline</name>
        <dbReference type="ChEBI" id="CHEBI:57743"/>
    </ligand>
</feature>
<feature type="binding site" evidence="1">
    <location>
        <position position="280"/>
    </location>
    <ligand>
        <name>L-citrulline</name>
        <dbReference type="ChEBI" id="CHEBI:57743"/>
    </ligand>
</feature>
<evidence type="ECO:0000255" key="1">
    <source>
        <dbReference type="HAMAP-Rule" id="MF_00581"/>
    </source>
</evidence>
<organism>
    <name type="scientific">Acidovorax ebreus (strain TPSY)</name>
    <name type="common">Diaphorobacter sp. (strain TPSY)</name>
    <dbReference type="NCBI Taxonomy" id="535289"/>
    <lineage>
        <taxon>Bacteria</taxon>
        <taxon>Pseudomonadati</taxon>
        <taxon>Pseudomonadota</taxon>
        <taxon>Betaproteobacteria</taxon>
        <taxon>Burkholderiales</taxon>
        <taxon>Comamonadaceae</taxon>
        <taxon>Diaphorobacter</taxon>
    </lineage>
</organism>
<keyword id="KW-0028">Amino-acid biosynthesis</keyword>
<keyword id="KW-0055">Arginine biosynthesis</keyword>
<keyword id="KW-0067">ATP-binding</keyword>
<keyword id="KW-0963">Cytoplasm</keyword>
<keyword id="KW-0436">Ligase</keyword>
<keyword id="KW-0547">Nucleotide-binding</keyword>
<keyword id="KW-1185">Reference proteome</keyword>
<gene>
    <name evidence="1" type="primary">argG</name>
    <name type="ordered locus">Dtpsy_2233</name>
</gene>
<comment type="catalytic activity">
    <reaction evidence="1">
        <text>L-citrulline + L-aspartate + ATP = 2-(N(omega)-L-arginino)succinate + AMP + diphosphate + H(+)</text>
        <dbReference type="Rhea" id="RHEA:10932"/>
        <dbReference type="ChEBI" id="CHEBI:15378"/>
        <dbReference type="ChEBI" id="CHEBI:29991"/>
        <dbReference type="ChEBI" id="CHEBI:30616"/>
        <dbReference type="ChEBI" id="CHEBI:33019"/>
        <dbReference type="ChEBI" id="CHEBI:57472"/>
        <dbReference type="ChEBI" id="CHEBI:57743"/>
        <dbReference type="ChEBI" id="CHEBI:456215"/>
        <dbReference type="EC" id="6.3.4.5"/>
    </reaction>
</comment>
<comment type="pathway">
    <text evidence="1">Amino-acid biosynthesis; L-arginine biosynthesis; L-arginine from L-ornithine and carbamoyl phosphate: step 2/3.</text>
</comment>
<comment type="subunit">
    <text evidence="1">Homotetramer.</text>
</comment>
<comment type="subcellular location">
    <subcellularLocation>
        <location evidence="1">Cytoplasm</location>
    </subcellularLocation>
</comment>
<comment type="similarity">
    <text evidence="1">Belongs to the argininosuccinate synthase family. Type 2 subfamily.</text>
</comment>
<proteinExistence type="inferred from homology"/>
<protein>
    <recommendedName>
        <fullName evidence="1">Argininosuccinate synthase</fullName>
        <ecNumber evidence="1">6.3.4.5</ecNumber>
    </recommendedName>
    <alternativeName>
        <fullName evidence="1">Citrulline--aspartate ligase</fullName>
    </alternativeName>
</protein>
<reference key="1">
    <citation type="submission" date="2009-01" db="EMBL/GenBank/DDBJ databases">
        <title>Complete sequence of Diaphorobacter sp. TPSY.</title>
        <authorList>
            <consortium name="US DOE Joint Genome Institute"/>
            <person name="Lucas S."/>
            <person name="Copeland A."/>
            <person name="Lapidus A."/>
            <person name="Glavina del Rio T."/>
            <person name="Tice H."/>
            <person name="Bruce D."/>
            <person name="Goodwin L."/>
            <person name="Pitluck S."/>
            <person name="Chertkov O."/>
            <person name="Brettin T."/>
            <person name="Detter J.C."/>
            <person name="Han C."/>
            <person name="Larimer F."/>
            <person name="Land M."/>
            <person name="Hauser L."/>
            <person name="Kyrpides N."/>
            <person name="Mikhailova N."/>
            <person name="Coates J.D."/>
        </authorList>
    </citation>
    <scope>NUCLEOTIDE SEQUENCE [LARGE SCALE GENOMIC DNA]</scope>
    <source>
        <strain>TPSY</strain>
    </source>
</reference>
<name>ASSY_ACIET</name>
<sequence length="448" mass="49343">MATILQHLPVGQKVGIAFSGGLDTSAALRWMKNKGALPYAYTANLGQPDEADYDEIPRKAMEYGAEKARLIDCRTQLAHEGIAAIQAGAFHISTGGITYFNTTPLGRAVTGTMLVAAMKEDDVHIWGDGSTFKGNDIERFYRYGLLTNPALKIYKPWLDQKFIDELGGRAEMSAFMTKEGFGYKMSAEKAYSTDSNMLGATHEAKDLEFLSSGIRIVNPIMGVAFWKPEVDVPAEEVSVTFDEGQPVAVNGKEIADPVELFLELNRIGGRHGLGMSDQIENRIIEAKSRGIYEAPGMALLHIAYERLVTGIHNEDTIEQYRLNGLKLGRLLYQGRWFDPQAIMLRETAQRWVARAVTGTVTLELRRGNDYSILNTESPNLTYAPERLSMEKVEDAPFSPLDRIGQLTMRNLDISDTRGKLGVYARAGLLSLGGNAALAQLEDGGAKKK</sequence>